<gene>
    <name evidence="1" type="primary">proS</name>
    <name type="ordered locus">WS1580</name>
</gene>
<feature type="chain" id="PRO_0000248814" description="Proline--tRNA ligase">
    <location>
        <begin position="1"/>
        <end position="570"/>
    </location>
</feature>
<dbReference type="EC" id="6.1.1.15" evidence="1"/>
<dbReference type="EMBL" id="BX571661">
    <property type="protein sequence ID" value="CAE10620.1"/>
    <property type="molecule type" value="Genomic_DNA"/>
</dbReference>
<dbReference type="RefSeq" id="WP_011139404.1">
    <property type="nucleotide sequence ID" value="NC_005090.1"/>
</dbReference>
<dbReference type="SMR" id="Q7M8L1"/>
<dbReference type="STRING" id="273121.WS1580"/>
<dbReference type="KEGG" id="wsu:WS1580"/>
<dbReference type="eggNOG" id="COG0442">
    <property type="taxonomic scope" value="Bacteria"/>
</dbReference>
<dbReference type="HOGENOM" id="CLU_016739_0_0_7"/>
<dbReference type="Proteomes" id="UP000000422">
    <property type="component" value="Chromosome"/>
</dbReference>
<dbReference type="GO" id="GO:0005829">
    <property type="term" value="C:cytosol"/>
    <property type="evidence" value="ECO:0007669"/>
    <property type="project" value="TreeGrafter"/>
</dbReference>
<dbReference type="GO" id="GO:0002161">
    <property type="term" value="F:aminoacyl-tRNA deacylase activity"/>
    <property type="evidence" value="ECO:0007669"/>
    <property type="project" value="InterPro"/>
</dbReference>
<dbReference type="GO" id="GO:0005524">
    <property type="term" value="F:ATP binding"/>
    <property type="evidence" value="ECO:0007669"/>
    <property type="project" value="UniProtKB-UniRule"/>
</dbReference>
<dbReference type="GO" id="GO:0004827">
    <property type="term" value="F:proline-tRNA ligase activity"/>
    <property type="evidence" value="ECO:0007669"/>
    <property type="project" value="UniProtKB-UniRule"/>
</dbReference>
<dbReference type="GO" id="GO:0006433">
    <property type="term" value="P:prolyl-tRNA aminoacylation"/>
    <property type="evidence" value="ECO:0007669"/>
    <property type="project" value="UniProtKB-UniRule"/>
</dbReference>
<dbReference type="CDD" id="cd04334">
    <property type="entry name" value="ProRS-INS"/>
    <property type="match status" value="1"/>
</dbReference>
<dbReference type="CDD" id="cd00861">
    <property type="entry name" value="ProRS_anticodon_short"/>
    <property type="match status" value="1"/>
</dbReference>
<dbReference type="CDD" id="cd00779">
    <property type="entry name" value="ProRS_core_prok"/>
    <property type="match status" value="1"/>
</dbReference>
<dbReference type="FunFam" id="3.30.930.10:FF:000065">
    <property type="entry name" value="Proline--tRNA ligase"/>
    <property type="match status" value="1"/>
</dbReference>
<dbReference type="FunFam" id="3.30.930.10:FF:000066">
    <property type="entry name" value="Proline--tRNA ligase"/>
    <property type="match status" value="1"/>
</dbReference>
<dbReference type="Gene3D" id="3.40.50.800">
    <property type="entry name" value="Anticodon-binding domain"/>
    <property type="match status" value="1"/>
</dbReference>
<dbReference type="Gene3D" id="3.30.930.10">
    <property type="entry name" value="Bira Bifunctional Protein, Domain 2"/>
    <property type="match status" value="2"/>
</dbReference>
<dbReference type="HAMAP" id="MF_01569">
    <property type="entry name" value="Pro_tRNA_synth_type1"/>
    <property type="match status" value="1"/>
</dbReference>
<dbReference type="InterPro" id="IPR002314">
    <property type="entry name" value="aa-tRNA-synt_IIb"/>
</dbReference>
<dbReference type="InterPro" id="IPR006195">
    <property type="entry name" value="aa-tRNA-synth_II"/>
</dbReference>
<dbReference type="InterPro" id="IPR045864">
    <property type="entry name" value="aa-tRNA-synth_II/BPL/LPL"/>
</dbReference>
<dbReference type="InterPro" id="IPR004154">
    <property type="entry name" value="Anticodon-bd"/>
</dbReference>
<dbReference type="InterPro" id="IPR036621">
    <property type="entry name" value="Anticodon-bd_dom_sf"/>
</dbReference>
<dbReference type="InterPro" id="IPR002316">
    <property type="entry name" value="Pro-tRNA-ligase_IIa"/>
</dbReference>
<dbReference type="InterPro" id="IPR004500">
    <property type="entry name" value="Pro-tRNA-synth_IIa_bac-type"/>
</dbReference>
<dbReference type="InterPro" id="IPR023717">
    <property type="entry name" value="Pro-tRNA-Synthase_IIa_type1"/>
</dbReference>
<dbReference type="InterPro" id="IPR050062">
    <property type="entry name" value="Pro-tRNA_synthetase"/>
</dbReference>
<dbReference type="InterPro" id="IPR044140">
    <property type="entry name" value="ProRS_anticodon_short"/>
</dbReference>
<dbReference type="InterPro" id="IPR033730">
    <property type="entry name" value="ProRS_core_prok"/>
</dbReference>
<dbReference type="InterPro" id="IPR036754">
    <property type="entry name" value="YbaK/aa-tRNA-synt-asso_dom_sf"/>
</dbReference>
<dbReference type="InterPro" id="IPR007214">
    <property type="entry name" value="YbaK/aa-tRNA-synth-assoc-dom"/>
</dbReference>
<dbReference type="NCBIfam" id="NF006625">
    <property type="entry name" value="PRK09194.1"/>
    <property type="match status" value="1"/>
</dbReference>
<dbReference type="NCBIfam" id="TIGR00409">
    <property type="entry name" value="proS_fam_II"/>
    <property type="match status" value="1"/>
</dbReference>
<dbReference type="PANTHER" id="PTHR42753">
    <property type="entry name" value="MITOCHONDRIAL RIBOSOME PROTEIN L39/PROLYL-TRNA LIGASE FAMILY MEMBER"/>
    <property type="match status" value="1"/>
</dbReference>
<dbReference type="PANTHER" id="PTHR42753:SF2">
    <property type="entry name" value="PROLINE--TRNA LIGASE"/>
    <property type="match status" value="1"/>
</dbReference>
<dbReference type="Pfam" id="PF03129">
    <property type="entry name" value="HGTP_anticodon"/>
    <property type="match status" value="1"/>
</dbReference>
<dbReference type="Pfam" id="PF00587">
    <property type="entry name" value="tRNA-synt_2b"/>
    <property type="match status" value="1"/>
</dbReference>
<dbReference type="Pfam" id="PF04073">
    <property type="entry name" value="tRNA_edit"/>
    <property type="match status" value="1"/>
</dbReference>
<dbReference type="PRINTS" id="PR01046">
    <property type="entry name" value="TRNASYNTHPRO"/>
</dbReference>
<dbReference type="SUPFAM" id="SSF52954">
    <property type="entry name" value="Class II aaRS ABD-related"/>
    <property type="match status" value="1"/>
</dbReference>
<dbReference type="SUPFAM" id="SSF55681">
    <property type="entry name" value="Class II aaRS and biotin synthetases"/>
    <property type="match status" value="1"/>
</dbReference>
<dbReference type="SUPFAM" id="SSF55826">
    <property type="entry name" value="YbaK/ProRS associated domain"/>
    <property type="match status" value="1"/>
</dbReference>
<dbReference type="PROSITE" id="PS50862">
    <property type="entry name" value="AA_TRNA_LIGASE_II"/>
    <property type="match status" value="1"/>
</dbReference>
<comment type="function">
    <text evidence="1">Catalyzes the attachment of proline to tRNA(Pro) in a two-step reaction: proline is first activated by ATP to form Pro-AMP and then transferred to the acceptor end of tRNA(Pro). As ProRS can inadvertently accommodate and process non-cognate amino acids such as alanine and cysteine, to avoid such errors it has two additional distinct editing activities against alanine. One activity is designated as 'pretransfer' editing and involves the tRNA(Pro)-independent hydrolysis of activated Ala-AMP. The other activity is designated 'posttransfer' editing and involves deacylation of mischarged Ala-tRNA(Pro). The misacylated Cys-tRNA(Pro) is not edited by ProRS.</text>
</comment>
<comment type="catalytic activity">
    <reaction evidence="1">
        <text>tRNA(Pro) + L-proline + ATP = L-prolyl-tRNA(Pro) + AMP + diphosphate</text>
        <dbReference type="Rhea" id="RHEA:14305"/>
        <dbReference type="Rhea" id="RHEA-COMP:9700"/>
        <dbReference type="Rhea" id="RHEA-COMP:9702"/>
        <dbReference type="ChEBI" id="CHEBI:30616"/>
        <dbReference type="ChEBI" id="CHEBI:33019"/>
        <dbReference type="ChEBI" id="CHEBI:60039"/>
        <dbReference type="ChEBI" id="CHEBI:78442"/>
        <dbReference type="ChEBI" id="CHEBI:78532"/>
        <dbReference type="ChEBI" id="CHEBI:456215"/>
        <dbReference type="EC" id="6.1.1.15"/>
    </reaction>
</comment>
<comment type="subunit">
    <text evidence="1">Homodimer.</text>
</comment>
<comment type="subcellular location">
    <subcellularLocation>
        <location evidence="1">Cytoplasm</location>
    </subcellularLocation>
</comment>
<comment type="domain">
    <text evidence="1">Consists of three domains: the N-terminal catalytic domain, the editing domain and the C-terminal anticodon-binding domain.</text>
</comment>
<comment type="similarity">
    <text evidence="1">Belongs to the class-II aminoacyl-tRNA synthetase family. ProS type 1 subfamily.</text>
</comment>
<name>SYP_WOLSU</name>
<reference key="1">
    <citation type="journal article" date="2003" name="Proc. Natl. Acad. Sci. U.S.A.">
        <title>Complete genome sequence and analysis of Wolinella succinogenes.</title>
        <authorList>
            <person name="Baar C."/>
            <person name="Eppinger M."/>
            <person name="Raddatz G."/>
            <person name="Simon J."/>
            <person name="Lanz C."/>
            <person name="Klimmek O."/>
            <person name="Nandakumar R."/>
            <person name="Gross R."/>
            <person name="Rosinus A."/>
            <person name="Keller H."/>
            <person name="Jagtap P."/>
            <person name="Linke B."/>
            <person name="Meyer F."/>
            <person name="Lederer H."/>
            <person name="Schuster S.C."/>
        </authorList>
    </citation>
    <scope>NUCLEOTIDE SEQUENCE [LARGE SCALE GENOMIC DNA]</scope>
    <source>
        <strain>ATCC 29543 / DSM 1740 / CCUG 13145 / JCM 31913 / LMG 7466 / NCTC 11488 / FDC 602W</strain>
    </source>
</reference>
<sequence length="570" mass="63537">MRFSAFFAPTLKEAPKDATLKSHEYLIRGGYIQQVGSGIYNFLPLGKRVMDKIRQVVKEEMDQAGAQEVMLGFVTPAELWRNSGRFEKYGKELLRFKDRKENDFVLGPTHEEMVVELAKGYVKSYKQLPLHLYQIHLKFRDEIRPRFGLMRGREFVMKDGYSFHANEADLIREFELMEATYKRIFTRLGLDFRVVEADSGAIGGSGSKEFMVLAQSGEDTIAVCDSCEYAANIEAAKRRAKKVDSPAPIASFSKFKTPEVKSIEALAEFFKVDPFYTLKVVVKKAFFDGGKSELAFFFLRGCDSLQETKACNAIGANELLDVSEEELIKAGLEPGFIGPYALKNLTGANHILFDLELKDAQGLIAGANERDHHFVGVNLGEFEGLIYKDLAEVGEGDGCPLCEGRLTYKKGIEVGHIFQLGTRYSEPLGANFLNPEGKSQPLVMGCYGIGVSRLLAAVIEQHHDEKGCIWTKSTAPFNLVIVVSNVKDPSQKAYAENLYNALQKEGIEVLLDDRDERYGSKMADFELLGIPYAVIVGKGLIEGQVELVNRANLQKGIVLADDILGRILEL</sequence>
<accession>Q7M8L1</accession>
<evidence type="ECO:0000255" key="1">
    <source>
        <dbReference type="HAMAP-Rule" id="MF_01569"/>
    </source>
</evidence>
<keyword id="KW-0030">Aminoacyl-tRNA synthetase</keyword>
<keyword id="KW-0067">ATP-binding</keyword>
<keyword id="KW-0963">Cytoplasm</keyword>
<keyword id="KW-0436">Ligase</keyword>
<keyword id="KW-0547">Nucleotide-binding</keyword>
<keyword id="KW-0648">Protein biosynthesis</keyword>
<keyword id="KW-1185">Reference proteome</keyword>
<protein>
    <recommendedName>
        <fullName evidence="1">Proline--tRNA ligase</fullName>
        <ecNumber evidence="1">6.1.1.15</ecNumber>
    </recommendedName>
    <alternativeName>
        <fullName evidence="1">Prolyl-tRNA synthetase</fullName>
        <shortName evidence="1">ProRS</shortName>
    </alternativeName>
</protein>
<organism>
    <name type="scientific">Wolinella succinogenes (strain ATCC 29543 / DSM 1740 / CCUG 13145 / JCM 31913 / LMG 7466 / NCTC 11488 / FDC 602W)</name>
    <name type="common">Vibrio succinogenes</name>
    <dbReference type="NCBI Taxonomy" id="273121"/>
    <lineage>
        <taxon>Bacteria</taxon>
        <taxon>Pseudomonadati</taxon>
        <taxon>Campylobacterota</taxon>
        <taxon>Epsilonproteobacteria</taxon>
        <taxon>Campylobacterales</taxon>
        <taxon>Helicobacteraceae</taxon>
        <taxon>Wolinella</taxon>
    </lineage>
</organism>
<proteinExistence type="inferred from homology"/>